<organism>
    <name type="scientific">Burkholderia mallei (strain ATCC 23344)</name>
    <dbReference type="NCBI Taxonomy" id="243160"/>
    <lineage>
        <taxon>Bacteria</taxon>
        <taxon>Pseudomonadati</taxon>
        <taxon>Pseudomonadota</taxon>
        <taxon>Betaproteobacteria</taxon>
        <taxon>Burkholderiales</taxon>
        <taxon>Burkholderiaceae</taxon>
        <taxon>Burkholderia</taxon>
        <taxon>pseudomallei group</taxon>
    </lineage>
</organism>
<name>SECB_BURMA</name>
<reference key="1">
    <citation type="journal article" date="2004" name="Proc. Natl. Acad. Sci. U.S.A.">
        <title>Structural flexibility in the Burkholderia mallei genome.</title>
        <authorList>
            <person name="Nierman W.C."/>
            <person name="DeShazer D."/>
            <person name="Kim H.S."/>
            <person name="Tettelin H."/>
            <person name="Nelson K.E."/>
            <person name="Feldblyum T.V."/>
            <person name="Ulrich R.L."/>
            <person name="Ronning C.M."/>
            <person name="Brinkac L.M."/>
            <person name="Daugherty S.C."/>
            <person name="Davidsen T.D."/>
            <person name="DeBoy R.T."/>
            <person name="Dimitrov G."/>
            <person name="Dodson R.J."/>
            <person name="Durkin A.S."/>
            <person name="Gwinn M.L."/>
            <person name="Haft D.H."/>
            <person name="Khouri H.M."/>
            <person name="Kolonay J.F."/>
            <person name="Madupu R."/>
            <person name="Mohammoud Y."/>
            <person name="Nelson W.C."/>
            <person name="Radune D."/>
            <person name="Romero C.M."/>
            <person name="Sarria S."/>
            <person name="Selengut J."/>
            <person name="Shamblin C."/>
            <person name="Sullivan S.A."/>
            <person name="White O."/>
            <person name="Yu Y."/>
            <person name="Zafar N."/>
            <person name="Zhou L."/>
            <person name="Fraser C.M."/>
        </authorList>
    </citation>
    <scope>NUCLEOTIDE SEQUENCE [LARGE SCALE GENOMIC DNA]</scope>
    <source>
        <strain>ATCC 23344</strain>
    </source>
</reference>
<feature type="chain" id="PRO_0000055358" description="Protein-export protein SecB">
    <location>
        <begin position="1"/>
        <end position="159"/>
    </location>
</feature>
<comment type="function">
    <text evidence="1">One of the proteins required for the normal export of preproteins out of the cell cytoplasm. It is a molecular chaperone that binds to a subset of precursor proteins, maintaining them in a translocation-competent state. It also specifically binds to its receptor SecA.</text>
</comment>
<comment type="subunit">
    <text evidence="1">Homotetramer, a dimer of dimers. One homotetramer interacts with 1 SecA dimer.</text>
</comment>
<comment type="subcellular location">
    <subcellularLocation>
        <location evidence="1">Cytoplasm</location>
    </subcellularLocation>
</comment>
<comment type="similarity">
    <text evidence="1">Belongs to the SecB family.</text>
</comment>
<gene>
    <name evidence="1" type="primary">secB</name>
    <name type="ordered locus">BMA3205</name>
</gene>
<protein>
    <recommendedName>
        <fullName evidence="1">Protein-export protein SecB</fullName>
    </recommendedName>
</protein>
<dbReference type="EMBL" id="CP000010">
    <property type="protein sequence ID" value="AAU48539.1"/>
    <property type="molecule type" value="Genomic_DNA"/>
</dbReference>
<dbReference type="RefSeq" id="WP_004198004.1">
    <property type="nucleotide sequence ID" value="NC_006348.1"/>
</dbReference>
<dbReference type="RefSeq" id="YP_104681.1">
    <property type="nucleotide sequence ID" value="NC_006348.1"/>
</dbReference>
<dbReference type="SMR" id="Q62F46"/>
<dbReference type="GeneID" id="93058964"/>
<dbReference type="KEGG" id="bma:BMA3205"/>
<dbReference type="PATRIC" id="fig|243160.12.peg.3282"/>
<dbReference type="eggNOG" id="COG1952">
    <property type="taxonomic scope" value="Bacteria"/>
</dbReference>
<dbReference type="HOGENOM" id="CLU_111574_1_0_4"/>
<dbReference type="Proteomes" id="UP000006693">
    <property type="component" value="Chromosome 1"/>
</dbReference>
<dbReference type="GO" id="GO:0005737">
    <property type="term" value="C:cytoplasm"/>
    <property type="evidence" value="ECO:0007669"/>
    <property type="project" value="UniProtKB-SubCell"/>
</dbReference>
<dbReference type="GO" id="GO:0051082">
    <property type="term" value="F:unfolded protein binding"/>
    <property type="evidence" value="ECO:0007669"/>
    <property type="project" value="InterPro"/>
</dbReference>
<dbReference type="GO" id="GO:0006457">
    <property type="term" value="P:protein folding"/>
    <property type="evidence" value="ECO:0007669"/>
    <property type="project" value="UniProtKB-UniRule"/>
</dbReference>
<dbReference type="GO" id="GO:0051262">
    <property type="term" value="P:protein tetramerization"/>
    <property type="evidence" value="ECO:0007669"/>
    <property type="project" value="InterPro"/>
</dbReference>
<dbReference type="GO" id="GO:0015031">
    <property type="term" value="P:protein transport"/>
    <property type="evidence" value="ECO:0007669"/>
    <property type="project" value="UniProtKB-UniRule"/>
</dbReference>
<dbReference type="Gene3D" id="3.10.420.10">
    <property type="entry name" value="SecB-like"/>
    <property type="match status" value="1"/>
</dbReference>
<dbReference type="HAMAP" id="MF_00821">
    <property type="entry name" value="SecB"/>
    <property type="match status" value="1"/>
</dbReference>
<dbReference type="InterPro" id="IPR003708">
    <property type="entry name" value="SecB"/>
</dbReference>
<dbReference type="InterPro" id="IPR035958">
    <property type="entry name" value="SecB-like_sf"/>
</dbReference>
<dbReference type="NCBIfam" id="NF004392">
    <property type="entry name" value="PRK05751.1-3"/>
    <property type="match status" value="1"/>
</dbReference>
<dbReference type="NCBIfam" id="NF004394">
    <property type="entry name" value="PRK05751.1-5"/>
    <property type="match status" value="1"/>
</dbReference>
<dbReference type="NCBIfam" id="TIGR00809">
    <property type="entry name" value="secB"/>
    <property type="match status" value="1"/>
</dbReference>
<dbReference type="PANTHER" id="PTHR36918">
    <property type="match status" value="1"/>
</dbReference>
<dbReference type="PANTHER" id="PTHR36918:SF1">
    <property type="entry name" value="PROTEIN-EXPORT PROTEIN SECB"/>
    <property type="match status" value="1"/>
</dbReference>
<dbReference type="Pfam" id="PF02556">
    <property type="entry name" value="SecB"/>
    <property type="match status" value="1"/>
</dbReference>
<dbReference type="PRINTS" id="PR01594">
    <property type="entry name" value="SECBCHAPRONE"/>
</dbReference>
<dbReference type="SUPFAM" id="SSF54611">
    <property type="entry name" value="SecB-like"/>
    <property type="match status" value="1"/>
</dbReference>
<proteinExistence type="inferred from homology"/>
<keyword id="KW-0143">Chaperone</keyword>
<keyword id="KW-0963">Cytoplasm</keyword>
<keyword id="KW-0653">Protein transport</keyword>
<keyword id="KW-1185">Reference proteome</keyword>
<keyword id="KW-0811">Translocation</keyword>
<keyword id="KW-0813">Transport</keyword>
<evidence type="ECO:0000255" key="1">
    <source>
        <dbReference type="HAMAP-Rule" id="MF_00821"/>
    </source>
</evidence>
<accession>Q62F46</accession>
<sequence length="159" mass="17671">MSDVENQPFFNIQRIYLKDLSLEQPNSPAIFLEQEMPAVEVEVDVKAERLAENVYEIVVAGTVTAKVREKVAFLVEAKQAGIFDIRNIPAEQIDPLCGIACPTILFPYLRSNIADSITRAGFPPIHLAEINFQALYEQRLAEISQQQQQGGAPNGTTLN</sequence>